<feature type="chain" id="PRO_1000057579" description="Glutamyl-tRNA reductase">
    <location>
        <begin position="1"/>
        <end position="422"/>
    </location>
</feature>
<feature type="active site" description="Nucleophile" evidence="1">
    <location>
        <position position="50"/>
    </location>
</feature>
<feature type="binding site" evidence="1">
    <location>
        <begin position="49"/>
        <end position="52"/>
    </location>
    <ligand>
        <name>substrate</name>
    </ligand>
</feature>
<feature type="binding site" evidence="1">
    <location>
        <position position="107"/>
    </location>
    <ligand>
        <name>substrate</name>
    </ligand>
</feature>
<feature type="binding site" evidence="1">
    <location>
        <begin position="112"/>
        <end position="114"/>
    </location>
    <ligand>
        <name>substrate</name>
    </ligand>
</feature>
<feature type="binding site" evidence="1">
    <location>
        <position position="118"/>
    </location>
    <ligand>
        <name>substrate</name>
    </ligand>
</feature>
<feature type="binding site" evidence="1">
    <location>
        <begin position="187"/>
        <end position="192"/>
    </location>
    <ligand>
        <name>NADP(+)</name>
        <dbReference type="ChEBI" id="CHEBI:58349"/>
    </ligand>
</feature>
<feature type="site" description="Important for activity" evidence="1">
    <location>
        <position position="97"/>
    </location>
</feature>
<keyword id="KW-0521">NADP</keyword>
<keyword id="KW-0560">Oxidoreductase</keyword>
<keyword id="KW-0627">Porphyrin biosynthesis</keyword>
<sequence>MAFIALGINHKTASVAVRERVAFTPEQMVEALQQLCRLTTSREAAILSTCNRSELYLEIDHPTADDVLAWLADYHRLTLDELRACAYVHQDEDAVRHMMRVASGLDSMVLGEPQILGQMKSAYAVAREAGTVGPLLGRLFQATFSTAKTVRTDTAIGENPVSVAFAAVSLAKQIFSDLHRSQALLIGAGETITLVARHLFEQGVKRIVVANRTLERASLLAEQFGAHAVLLSEIPEELANSDIVISSTASQLPILGKGAVERALKQRKHKPMFMVDIAVPRDIEPEVGELDDVYLYSVDDLHEVVAENLKSRQGAAQAAEELVGSGVTEFMQRLRELAAVDVLRAYRQQAERLRDDELGKAQRQLANGADPAEVLAQLARGLTNKLLHAPSVQMKKMSAEGRIDALALAQELFALDEGAPRH</sequence>
<evidence type="ECO:0000255" key="1">
    <source>
        <dbReference type="HAMAP-Rule" id="MF_00087"/>
    </source>
</evidence>
<comment type="function">
    <text evidence="1">Catalyzes the NADPH-dependent reduction of glutamyl-tRNA(Glu) to glutamate 1-semialdehyde (GSA).</text>
</comment>
<comment type="catalytic activity">
    <reaction evidence="1">
        <text>(S)-4-amino-5-oxopentanoate + tRNA(Glu) + NADP(+) = L-glutamyl-tRNA(Glu) + NADPH + H(+)</text>
        <dbReference type="Rhea" id="RHEA:12344"/>
        <dbReference type="Rhea" id="RHEA-COMP:9663"/>
        <dbReference type="Rhea" id="RHEA-COMP:9680"/>
        <dbReference type="ChEBI" id="CHEBI:15378"/>
        <dbReference type="ChEBI" id="CHEBI:57501"/>
        <dbReference type="ChEBI" id="CHEBI:57783"/>
        <dbReference type="ChEBI" id="CHEBI:58349"/>
        <dbReference type="ChEBI" id="CHEBI:78442"/>
        <dbReference type="ChEBI" id="CHEBI:78520"/>
        <dbReference type="EC" id="1.2.1.70"/>
    </reaction>
</comment>
<comment type="pathway">
    <text evidence="1">Porphyrin-containing compound metabolism; protoporphyrin-IX biosynthesis; 5-aminolevulinate from L-glutamyl-tRNA(Glu): step 1/2.</text>
</comment>
<comment type="subunit">
    <text evidence="1">Homodimer.</text>
</comment>
<comment type="domain">
    <text evidence="1">Possesses an unusual extended V-shaped dimeric structure with each monomer consisting of three distinct domains arranged along a curved 'spinal' alpha-helix. The N-terminal catalytic domain specifically recognizes the glutamate moiety of the substrate. The second domain is the NADPH-binding domain, and the third C-terminal domain is responsible for dimerization.</text>
</comment>
<comment type="miscellaneous">
    <text evidence="1">During catalysis, the active site Cys acts as a nucleophile attacking the alpha-carbonyl group of tRNA-bound glutamate with the formation of a thioester intermediate between enzyme and glutamate, and the concomitant release of tRNA(Glu). The thioester intermediate is finally reduced by direct hydride transfer from NADPH, to form the product GSA.</text>
</comment>
<comment type="similarity">
    <text evidence="1">Belongs to the glutamyl-tRNA reductase family.</text>
</comment>
<protein>
    <recommendedName>
        <fullName evidence="1">Glutamyl-tRNA reductase</fullName>
        <shortName evidence="1">GluTR</shortName>
        <ecNumber evidence="1">1.2.1.70</ecNumber>
    </recommendedName>
</protein>
<gene>
    <name evidence="1" type="primary">hemA</name>
    <name type="ordered locus">PSPA7_5315</name>
</gene>
<dbReference type="EC" id="1.2.1.70" evidence="1"/>
<dbReference type="EMBL" id="CP000744">
    <property type="protein sequence ID" value="ABR86849.1"/>
    <property type="molecule type" value="Genomic_DNA"/>
</dbReference>
<dbReference type="RefSeq" id="WP_012077387.1">
    <property type="nucleotide sequence ID" value="NC_009656.1"/>
</dbReference>
<dbReference type="SMR" id="A6VC62"/>
<dbReference type="GeneID" id="77223170"/>
<dbReference type="KEGG" id="pap:PSPA7_5315"/>
<dbReference type="HOGENOM" id="CLU_035113_2_2_6"/>
<dbReference type="UniPathway" id="UPA00251">
    <property type="reaction ID" value="UER00316"/>
</dbReference>
<dbReference type="Proteomes" id="UP000001582">
    <property type="component" value="Chromosome"/>
</dbReference>
<dbReference type="GO" id="GO:0008883">
    <property type="term" value="F:glutamyl-tRNA reductase activity"/>
    <property type="evidence" value="ECO:0007669"/>
    <property type="project" value="UniProtKB-UniRule"/>
</dbReference>
<dbReference type="GO" id="GO:0050661">
    <property type="term" value="F:NADP binding"/>
    <property type="evidence" value="ECO:0007669"/>
    <property type="project" value="InterPro"/>
</dbReference>
<dbReference type="GO" id="GO:0019353">
    <property type="term" value="P:protoporphyrinogen IX biosynthetic process from glutamate"/>
    <property type="evidence" value="ECO:0007669"/>
    <property type="project" value="TreeGrafter"/>
</dbReference>
<dbReference type="CDD" id="cd05213">
    <property type="entry name" value="NAD_bind_Glutamyl_tRNA_reduct"/>
    <property type="match status" value="1"/>
</dbReference>
<dbReference type="FunFam" id="3.30.460.30:FF:000001">
    <property type="entry name" value="Glutamyl-tRNA reductase"/>
    <property type="match status" value="1"/>
</dbReference>
<dbReference type="FunFam" id="3.40.50.720:FF:000031">
    <property type="entry name" value="Glutamyl-tRNA reductase"/>
    <property type="match status" value="1"/>
</dbReference>
<dbReference type="Gene3D" id="3.30.460.30">
    <property type="entry name" value="Glutamyl-tRNA reductase, N-terminal domain"/>
    <property type="match status" value="1"/>
</dbReference>
<dbReference type="Gene3D" id="3.40.50.720">
    <property type="entry name" value="NAD(P)-binding Rossmann-like Domain"/>
    <property type="match status" value="1"/>
</dbReference>
<dbReference type="HAMAP" id="MF_00087">
    <property type="entry name" value="Glu_tRNA_reductase"/>
    <property type="match status" value="1"/>
</dbReference>
<dbReference type="InterPro" id="IPR000343">
    <property type="entry name" value="4pyrrol_synth_GluRdtase"/>
</dbReference>
<dbReference type="InterPro" id="IPR015896">
    <property type="entry name" value="4pyrrol_synth_GluRdtase_dimer"/>
</dbReference>
<dbReference type="InterPro" id="IPR015895">
    <property type="entry name" value="4pyrrol_synth_GluRdtase_N"/>
</dbReference>
<dbReference type="InterPro" id="IPR018214">
    <property type="entry name" value="GluRdtase_CS"/>
</dbReference>
<dbReference type="InterPro" id="IPR036453">
    <property type="entry name" value="GluRdtase_dimer_dom_sf"/>
</dbReference>
<dbReference type="InterPro" id="IPR036343">
    <property type="entry name" value="GluRdtase_N_sf"/>
</dbReference>
<dbReference type="InterPro" id="IPR036291">
    <property type="entry name" value="NAD(P)-bd_dom_sf"/>
</dbReference>
<dbReference type="InterPro" id="IPR006151">
    <property type="entry name" value="Shikm_DH/Glu-tRNA_Rdtase"/>
</dbReference>
<dbReference type="NCBIfam" id="TIGR01035">
    <property type="entry name" value="hemA"/>
    <property type="match status" value="1"/>
</dbReference>
<dbReference type="PANTHER" id="PTHR43013">
    <property type="entry name" value="GLUTAMYL-TRNA REDUCTASE"/>
    <property type="match status" value="1"/>
</dbReference>
<dbReference type="PANTHER" id="PTHR43013:SF1">
    <property type="entry name" value="GLUTAMYL-TRNA REDUCTASE"/>
    <property type="match status" value="1"/>
</dbReference>
<dbReference type="Pfam" id="PF00745">
    <property type="entry name" value="GlutR_dimer"/>
    <property type="match status" value="1"/>
</dbReference>
<dbReference type="Pfam" id="PF05201">
    <property type="entry name" value="GlutR_N"/>
    <property type="match status" value="1"/>
</dbReference>
<dbReference type="Pfam" id="PF01488">
    <property type="entry name" value="Shikimate_DH"/>
    <property type="match status" value="1"/>
</dbReference>
<dbReference type="PIRSF" id="PIRSF000445">
    <property type="entry name" value="4pyrrol_synth_GluRdtase"/>
    <property type="match status" value="1"/>
</dbReference>
<dbReference type="SUPFAM" id="SSF69742">
    <property type="entry name" value="Glutamyl tRNA-reductase catalytic, N-terminal domain"/>
    <property type="match status" value="1"/>
</dbReference>
<dbReference type="SUPFAM" id="SSF69075">
    <property type="entry name" value="Glutamyl tRNA-reductase dimerization domain"/>
    <property type="match status" value="1"/>
</dbReference>
<dbReference type="SUPFAM" id="SSF51735">
    <property type="entry name" value="NAD(P)-binding Rossmann-fold domains"/>
    <property type="match status" value="1"/>
</dbReference>
<dbReference type="PROSITE" id="PS00747">
    <property type="entry name" value="GLUTR"/>
    <property type="match status" value="1"/>
</dbReference>
<name>HEM1_PSEP7</name>
<proteinExistence type="inferred from homology"/>
<accession>A6VC62</accession>
<organism>
    <name type="scientific">Pseudomonas paraeruginosa (strain DSM 24068 / PA7)</name>
    <name type="common">Pseudomonas aeruginosa (strain PA7)</name>
    <dbReference type="NCBI Taxonomy" id="381754"/>
    <lineage>
        <taxon>Bacteria</taxon>
        <taxon>Pseudomonadati</taxon>
        <taxon>Pseudomonadota</taxon>
        <taxon>Gammaproteobacteria</taxon>
        <taxon>Pseudomonadales</taxon>
        <taxon>Pseudomonadaceae</taxon>
        <taxon>Pseudomonas</taxon>
        <taxon>Pseudomonas paraeruginosa</taxon>
    </lineage>
</organism>
<reference key="1">
    <citation type="submission" date="2007-06" db="EMBL/GenBank/DDBJ databases">
        <authorList>
            <person name="Dodson R.J."/>
            <person name="Harkins D."/>
            <person name="Paulsen I.T."/>
        </authorList>
    </citation>
    <scope>NUCLEOTIDE SEQUENCE [LARGE SCALE GENOMIC DNA]</scope>
    <source>
        <strain>DSM 24068 / PA7</strain>
    </source>
</reference>